<reference key="1">
    <citation type="journal article" date="2006" name="Genome Res.">
        <title>Massive genome erosion and functional adaptations provide insights into the symbiotic lifestyle of Sodalis glossinidius in the tsetse host.</title>
        <authorList>
            <person name="Toh H."/>
            <person name="Weiss B.L."/>
            <person name="Perkin S.A.H."/>
            <person name="Yamashita A."/>
            <person name="Oshima K."/>
            <person name="Hattori M."/>
            <person name="Aksoy S."/>
        </authorList>
    </citation>
    <scope>NUCLEOTIDE SEQUENCE [LARGE SCALE GENOMIC DNA]</scope>
    <source>
        <strain>morsitans</strain>
    </source>
</reference>
<name>SYA_SODGM</name>
<evidence type="ECO:0000255" key="1">
    <source>
        <dbReference type="HAMAP-Rule" id="MF_00036"/>
    </source>
</evidence>
<comment type="function">
    <text evidence="1">Catalyzes the attachment of alanine to tRNA(Ala) in a two-step reaction: alanine is first activated by ATP to form Ala-AMP and then transferred to the acceptor end of tRNA(Ala). Also edits incorrectly charged Ser-tRNA(Ala) and Gly-tRNA(Ala) via its editing domain.</text>
</comment>
<comment type="catalytic activity">
    <reaction evidence="1">
        <text>tRNA(Ala) + L-alanine + ATP = L-alanyl-tRNA(Ala) + AMP + diphosphate</text>
        <dbReference type="Rhea" id="RHEA:12540"/>
        <dbReference type="Rhea" id="RHEA-COMP:9657"/>
        <dbReference type="Rhea" id="RHEA-COMP:9923"/>
        <dbReference type="ChEBI" id="CHEBI:30616"/>
        <dbReference type="ChEBI" id="CHEBI:33019"/>
        <dbReference type="ChEBI" id="CHEBI:57972"/>
        <dbReference type="ChEBI" id="CHEBI:78442"/>
        <dbReference type="ChEBI" id="CHEBI:78497"/>
        <dbReference type="ChEBI" id="CHEBI:456215"/>
        <dbReference type="EC" id="6.1.1.7"/>
    </reaction>
</comment>
<comment type="cofactor">
    <cofactor evidence="1">
        <name>Zn(2+)</name>
        <dbReference type="ChEBI" id="CHEBI:29105"/>
    </cofactor>
    <text evidence="1">Binds 1 zinc ion per subunit.</text>
</comment>
<comment type="subunit">
    <text evidence="1">Homotetramer.</text>
</comment>
<comment type="subcellular location">
    <subcellularLocation>
        <location evidence="1">Cytoplasm</location>
    </subcellularLocation>
</comment>
<comment type="domain">
    <text evidence="1">Consists of three domains; the N-terminal catalytic domain, the editing domain and the C-terminal C-Ala domain. The editing domain removes incorrectly charged amino acids, while the C-Ala domain, along with tRNA(Ala), serves as a bridge to cooperatively bring together the editing and aminoacylation centers thus stimulating deacylation of misacylated tRNAs.</text>
</comment>
<comment type="similarity">
    <text evidence="1">Belongs to the class-II aminoacyl-tRNA synthetase family.</text>
</comment>
<protein>
    <recommendedName>
        <fullName evidence="1">Alanine--tRNA ligase</fullName>
        <ecNumber evidence="1">6.1.1.7</ecNumber>
    </recommendedName>
    <alternativeName>
        <fullName evidence="1">Alanyl-tRNA synthetase</fullName>
        <shortName evidence="1">AlaRS</shortName>
    </alternativeName>
</protein>
<keyword id="KW-0030">Aminoacyl-tRNA synthetase</keyword>
<keyword id="KW-0067">ATP-binding</keyword>
<keyword id="KW-0963">Cytoplasm</keyword>
<keyword id="KW-0436">Ligase</keyword>
<keyword id="KW-0479">Metal-binding</keyword>
<keyword id="KW-0547">Nucleotide-binding</keyword>
<keyword id="KW-0648">Protein biosynthesis</keyword>
<keyword id="KW-0694">RNA-binding</keyword>
<keyword id="KW-0820">tRNA-binding</keyword>
<keyword id="KW-0862">Zinc</keyword>
<feature type="chain" id="PRO_0000347803" description="Alanine--tRNA ligase">
    <location>
        <begin position="1"/>
        <end position="875"/>
    </location>
</feature>
<feature type="binding site" evidence="1">
    <location>
        <position position="564"/>
    </location>
    <ligand>
        <name>Zn(2+)</name>
        <dbReference type="ChEBI" id="CHEBI:29105"/>
    </ligand>
</feature>
<feature type="binding site" evidence="1">
    <location>
        <position position="568"/>
    </location>
    <ligand>
        <name>Zn(2+)</name>
        <dbReference type="ChEBI" id="CHEBI:29105"/>
    </ligand>
</feature>
<feature type="binding site" evidence="1">
    <location>
        <position position="666"/>
    </location>
    <ligand>
        <name>Zn(2+)</name>
        <dbReference type="ChEBI" id="CHEBI:29105"/>
    </ligand>
</feature>
<feature type="binding site" evidence="1">
    <location>
        <position position="670"/>
    </location>
    <ligand>
        <name>Zn(2+)</name>
        <dbReference type="ChEBI" id="CHEBI:29105"/>
    </ligand>
</feature>
<organism>
    <name type="scientific">Sodalis glossinidius (strain morsitans)</name>
    <dbReference type="NCBI Taxonomy" id="343509"/>
    <lineage>
        <taxon>Bacteria</taxon>
        <taxon>Pseudomonadati</taxon>
        <taxon>Pseudomonadota</taxon>
        <taxon>Gammaproteobacteria</taxon>
        <taxon>Enterobacterales</taxon>
        <taxon>Bruguierivoracaceae</taxon>
        <taxon>Sodalis</taxon>
    </lineage>
</organism>
<accession>Q2NVL2</accession>
<proteinExistence type="inferred from homology"/>
<sequence>MSKSTAEIRQAFLDFFHSKGHQVVASSSLVPDNDPTLLFTNAGMNQFKDVFLGLDNRFYRRATTSQRCVRAGGKHNDLENVGYTARHHTFFEMLGNFSFGDYFKHDAIRFAWELLTGEHWFNLPKEKLWVTVYATDDEAYNIWASEVGIPAERIIRIGDNKGSAYASDNFWQMGDTGPCGPCSEIFYDHGEHIWGGPPGSPEEDGDRYIEIWNLVFMQFNRQADGTLLPLPKPSVDTGMGLERIAAVLQHVNSNYDIDLFKTLIAAAAEATGASDPDSKSLRVIADHIRSCVFLVSDGVVPSNEGRGYVLRRIIRRAIRHGNMLGASDTFFYKLVAPLIDVMGSAASQLQPQQAMVEQVLRAEEEQFARTLERGLTLLDDELAKLTGDTLDGETAFRLYDTYGFSLDLTADVCRERNLRVDEAGFERAMEAQRKRARESSGFGADYNSLLRVDETTRFFGYEHLEHQGRVTALFRDGQLVGVIRQGEEAVVVLDETPFYGESGGQVGDRGVLKAASGVFEVADTQKYGKAFGHQGKLSYGELKLGAQVTAQVDSARRERIRLNHSATHLLHAALRQVLGDHVGQKGSLVNDHYLRFDFSHNEAMKPEQIRRVEEIVNEQIRCNLPIQTDIMALEDARNKGAMALFGEKYEAQVRVLSMGDFSTELCGGTHASRTGDIGLFRIIAESGTAAGIRRIEAVTGEEALASLHQQSDLVQHIAQLVKGDSQTLVDKVRALQERSRQLEKDLQQLKNQQAAQESASLGRNVRDINGVKVLVRQLDSAEPKMLRTMVDDLKNQLGSAVIILATVAEGKVSLIAGVTKDLTDRVKAGDIVGHLAQQVGGKGGGRPDLAQAGGSDIAALPAALASVDAMLAAKL</sequence>
<dbReference type="EC" id="6.1.1.7" evidence="1"/>
<dbReference type="EMBL" id="AP008232">
    <property type="protein sequence ID" value="BAE73813.1"/>
    <property type="molecule type" value="Genomic_DNA"/>
</dbReference>
<dbReference type="RefSeq" id="WP_011410511.1">
    <property type="nucleotide sequence ID" value="NC_007712.1"/>
</dbReference>
<dbReference type="SMR" id="Q2NVL2"/>
<dbReference type="STRING" id="343509.SG0538"/>
<dbReference type="KEGG" id="sgl:SG0538"/>
<dbReference type="eggNOG" id="COG0013">
    <property type="taxonomic scope" value="Bacteria"/>
</dbReference>
<dbReference type="HOGENOM" id="CLU_004485_1_1_6"/>
<dbReference type="OrthoDB" id="9803884at2"/>
<dbReference type="BioCyc" id="SGLO343509:SGP1_RS04765-MONOMER"/>
<dbReference type="Proteomes" id="UP000001932">
    <property type="component" value="Chromosome"/>
</dbReference>
<dbReference type="GO" id="GO:0005829">
    <property type="term" value="C:cytosol"/>
    <property type="evidence" value="ECO:0007669"/>
    <property type="project" value="TreeGrafter"/>
</dbReference>
<dbReference type="GO" id="GO:0004813">
    <property type="term" value="F:alanine-tRNA ligase activity"/>
    <property type="evidence" value="ECO:0007669"/>
    <property type="project" value="UniProtKB-UniRule"/>
</dbReference>
<dbReference type="GO" id="GO:0002161">
    <property type="term" value="F:aminoacyl-tRNA deacylase activity"/>
    <property type="evidence" value="ECO:0007669"/>
    <property type="project" value="TreeGrafter"/>
</dbReference>
<dbReference type="GO" id="GO:0005524">
    <property type="term" value="F:ATP binding"/>
    <property type="evidence" value="ECO:0007669"/>
    <property type="project" value="UniProtKB-UniRule"/>
</dbReference>
<dbReference type="GO" id="GO:0000049">
    <property type="term" value="F:tRNA binding"/>
    <property type="evidence" value="ECO:0007669"/>
    <property type="project" value="UniProtKB-KW"/>
</dbReference>
<dbReference type="GO" id="GO:0008270">
    <property type="term" value="F:zinc ion binding"/>
    <property type="evidence" value="ECO:0007669"/>
    <property type="project" value="UniProtKB-UniRule"/>
</dbReference>
<dbReference type="GO" id="GO:0006419">
    <property type="term" value="P:alanyl-tRNA aminoacylation"/>
    <property type="evidence" value="ECO:0007669"/>
    <property type="project" value="UniProtKB-UniRule"/>
</dbReference>
<dbReference type="GO" id="GO:0045892">
    <property type="term" value="P:negative regulation of DNA-templated transcription"/>
    <property type="evidence" value="ECO:0007669"/>
    <property type="project" value="TreeGrafter"/>
</dbReference>
<dbReference type="CDD" id="cd00673">
    <property type="entry name" value="AlaRS_core"/>
    <property type="match status" value="1"/>
</dbReference>
<dbReference type="FunFam" id="2.40.30.130:FF:000001">
    <property type="entry name" value="Alanine--tRNA ligase"/>
    <property type="match status" value="1"/>
</dbReference>
<dbReference type="FunFam" id="3.10.310.40:FF:000001">
    <property type="entry name" value="Alanine--tRNA ligase"/>
    <property type="match status" value="1"/>
</dbReference>
<dbReference type="FunFam" id="3.30.54.20:FF:000001">
    <property type="entry name" value="Alanine--tRNA ligase"/>
    <property type="match status" value="1"/>
</dbReference>
<dbReference type="FunFam" id="3.30.930.10:FF:000004">
    <property type="entry name" value="Alanine--tRNA ligase"/>
    <property type="match status" value="1"/>
</dbReference>
<dbReference type="FunFam" id="3.30.980.10:FF:000004">
    <property type="entry name" value="Alanine--tRNA ligase, cytoplasmic"/>
    <property type="match status" value="1"/>
</dbReference>
<dbReference type="Gene3D" id="2.40.30.130">
    <property type="match status" value="1"/>
</dbReference>
<dbReference type="Gene3D" id="3.10.310.40">
    <property type="match status" value="1"/>
</dbReference>
<dbReference type="Gene3D" id="3.30.54.20">
    <property type="match status" value="1"/>
</dbReference>
<dbReference type="Gene3D" id="6.10.250.550">
    <property type="match status" value="1"/>
</dbReference>
<dbReference type="Gene3D" id="3.30.930.10">
    <property type="entry name" value="Bira Bifunctional Protein, Domain 2"/>
    <property type="match status" value="1"/>
</dbReference>
<dbReference type="Gene3D" id="3.30.980.10">
    <property type="entry name" value="Threonyl-trna Synthetase, Chain A, domain 2"/>
    <property type="match status" value="1"/>
</dbReference>
<dbReference type="HAMAP" id="MF_00036_B">
    <property type="entry name" value="Ala_tRNA_synth_B"/>
    <property type="match status" value="1"/>
</dbReference>
<dbReference type="InterPro" id="IPR045864">
    <property type="entry name" value="aa-tRNA-synth_II/BPL/LPL"/>
</dbReference>
<dbReference type="InterPro" id="IPR002318">
    <property type="entry name" value="Ala-tRNA-lgiase_IIc"/>
</dbReference>
<dbReference type="InterPro" id="IPR018162">
    <property type="entry name" value="Ala-tRNA-ligase_IIc_anticod-bd"/>
</dbReference>
<dbReference type="InterPro" id="IPR018165">
    <property type="entry name" value="Ala-tRNA-synth_IIc_core"/>
</dbReference>
<dbReference type="InterPro" id="IPR018164">
    <property type="entry name" value="Ala-tRNA-synth_IIc_N"/>
</dbReference>
<dbReference type="InterPro" id="IPR050058">
    <property type="entry name" value="Ala-tRNA_ligase"/>
</dbReference>
<dbReference type="InterPro" id="IPR023033">
    <property type="entry name" value="Ala_tRNA_ligase_euk/bac"/>
</dbReference>
<dbReference type="InterPro" id="IPR003156">
    <property type="entry name" value="DHHA1_dom"/>
</dbReference>
<dbReference type="InterPro" id="IPR018163">
    <property type="entry name" value="Thr/Ala-tRNA-synth_IIc_edit"/>
</dbReference>
<dbReference type="InterPro" id="IPR009000">
    <property type="entry name" value="Transl_B-barrel_sf"/>
</dbReference>
<dbReference type="InterPro" id="IPR012947">
    <property type="entry name" value="tRNA_SAD"/>
</dbReference>
<dbReference type="NCBIfam" id="TIGR00344">
    <property type="entry name" value="alaS"/>
    <property type="match status" value="1"/>
</dbReference>
<dbReference type="PANTHER" id="PTHR11777:SF9">
    <property type="entry name" value="ALANINE--TRNA LIGASE, CYTOPLASMIC"/>
    <property type="match status" value="1"/>
</dbReference>
<dbReference type="PANTHER" id="PTHR11777">
    <property type="entry name" value="ALANYL-TRNA SYNTHETASE"/>
    <property type="match status" value="1"/>
</dbReference>
<dbReference type="Pfam" id="PF02272">
    <property type="entry name" value="DHHA1"/>
    <property type="match status" value="1"/>
</dbReference>
<dbReference type="Pfam" id="PF01411">
    <property type="entry name" value="tRNA-synt_2c"/>
    <property type="match status" value="1"/>
</dbReference>
<dbReference type="Pfam" id="PF07973">
    <property type="entry name" value="tRNA_SAD"/>
    <property type="match status" value="1"/>
</dbReference>
<dbReference type="PRINTS" id="PR00980">
    <property type="entry name" value="TRNASYNTHALA"/>
</dbReference>
<dbReference type="SMART" id="SM00863">
    <property type="entry name" value="tRNA_SAD"/>
    <property type="match status" value="1"/>
</dbReference>
<dbReference type="SUPFAM" id="SSF55681">
    <property type="entry name" value="Class II aaRS and biotin synthetases"/>
    <property type="match status" value="1"/>
</dbReference>
<dbReference type="SUPFAM" id="SSF101353">
    <property type="entry name" value="Putative anticodon-binding domain of alanyl-tRNA synthetase (AlaRS)"/>
    <property type="match status" value="1"/>
</dbReference>
<dbReference type="SUPFAM" id="SSF55186">
    <property type="entry name" value="ThrRS/AlaRS common domain"/>
    <property type="match status" value="1"/>
</dbReference>
<dbReference type="SUPFAM" id="SSF50447">
    <property type="entry name" value="Translation proteins"/>
    <property type="match status" value="1"/>
</dbReference>
<dbReference type="PROSITE" id="PS50860">
    <property type="entry name" value="AA_TRNA_LIGASE_II_ALA"/>
    <property type="match status" value="1"/>
</dbReference>
<gene>
    <name evidence="1" type="primary">alaS</name>
    <name type="ordered locus">SG0538</name>
</gene>